<keyword id="KW-0028">Amino-acid biosynthesis</keyword>
<keyword id="KW-0032">Aminotransferase</keyword>
<keyword id="KW-0368">Histidine biosynthesis</keyword>
<keyword id="KW-0663">Pyridoxal phosphate</keyword>
<keyword id="KW-1185">Reference proteome</keyword>
<keyword id="KW-0808">Transferase</keyword>
<dbReference type="EC" id="2.6.1.9" evidence="1"/>
<dbReference type="EMBL" id="AM114193">
    <property type="protein sequence ID" value="CAJ37540.1"/>
    <property type="molecule type" value="Genomic_DNA"/>
</dbReference>
<dbReference type="RefSeq" id="WP_012035042.1">
    <property type="nucleotide sequence ID" value="NC_009464.1"/>
</dbReference>
<dbReference type="SMR" id="Q0W253"/>
<dbReference type="STRING" id="351160.RCIX2460"/>
<dbReference type="GeneID" id="5143587"/>
<dbReference type="KEGG" id="rci:RCIX2460"/>
<dbReference type="eggNOG" id="arCOG04273">
    <property type="taxonomic scope" value="Archaea"/>
</dbReference>
<dbReference type="OrthoDB" id="9929at2157"/>
<dbReference type="UniPathway" id="UPA00031">
    <property type="reaction ID" value="UER00012"/>
</dbReference>
<dbReference type="Proteomes" id="UP000000663">
    <property type="component" value="Chromosome"/>
</dbReference>
<dbReference type="GO" id="GO:0004400">
    <property type="term" value="F:histidinol-phosphate transaminase activity"/>
    <property type="evidence" value="ECO:0007669"/>
    <property type="project" value="UniProtKB-UniRule"/>
</dbReference>
<dbReference type="GO" id="GO:0030170">
    <property type="term" value="F:pyridoxal phosphate binding"/>
    <property type="evidence" value="ECO:0007669"/>
    <property type="project" value="InterPro"/>
</dbReference>
<dbReference type="GO" id="GO:0000105">
    <property type="term" value="P:L-histidine biosynthetic process"/>
    <property type="evidence" value="ECO:0007669"/>
    <property type="project" value="UniProtKB-UniRule"/>
</dbReference>
<dbReference type="CDD" id="cd00609">
    <property type="entry name" value="AAT_like"/>
    <property type="match status" value="1"/>
</dbReference>
<dbReference type="Gene3D" id="3.90.1150.10">
    <property type="entry name" value="Aspartate Aminotransferase, domain 1"/>
    <property type="match status" value="1"/>
</dbReference>
<dbReference type="Gene3D" id="3.40.640.10">
    <property type="entry name" value="Type I PLP-dependent aspartate aminotransferase-like (Major domain)"/>
    <property type="match status" value="1"/>
</dbReference>
<dbReference type="HAMAP" id="MF_01023">
    <property type="entry name" value="HisC_aminotrans_2"/>
    <property type="match status" value="1"/>
</dbReference>
<dbReference type="InterPro" id="IPR001917">
    <property type="entry name" value="Aminotrans_II_pyridoxalP_BS"/>
</dbReference>
<dbReference type="InterPro" id="IPR004839">
    <property type="entry name" value="Aminotransferase_I/II_large"/>
</dbReference>
<dbReference type="InterPro" id="IPR005861">
    <property type="entry name" value="HisP_aminotrans"/>
</dbReference>
<dbReference type="InterPro" id="IPR015424">
    <property type="entry name" value="PyrdxlP-dep_Trfase"/>
</dbReference>
<dbReference type="InterPro" id="IPR015421">
    <property type="entry name" value="PyrdxlP-dep_Trfase_major"/>
</dbReference>
<dbReference type="InterPro" id="IPR015422">
    <property type="entry name" value="PyrdxlP-dep_Trfase_small"/>
</dbReference>
<dbReference type="NCBIfam" id="TIGR01141">
    <property type="entry name" value="hisC"/>
    <property type="match status" value="1"/>
</dbReference>
<dbReference type="PANTHER" id="PTHR42885:SF2">
    <property type="entry name" value="HISTIDINOL-PHOSPHATE AMINOTRANSFERASE"/>
    <property type="match status" value="1"/>
</dbReference>
<dbReference type="PANTHER" id="PTHR42885">
    <property type="entry name" value="HISTIDINOL-PHOSPHATE AMINOTRANSFERASE-RELATED"/>
    <property type="match status" value="1"/>
</dbReference>
<dbReference type="Pfam" id="PF00155">
    <property type="entry name" value="Aminotran_1_2"/>
    <property type="match status" value="1"/>
</dbReference>
<dbReference type="SUPFAM" id="SSF53383">
    <property type="entry name" value="PLP-dependent transferases"/>
    <property type="match status" value="1"/>
</dbReference>
<dbReference type="PROSITE" id="PS00599">
    <property type="entry name" value="AA_TRANSFER_CLASS_2"/>
    <property type="match status" value="1"/>
</dbReference>
<reference key="1">
    <citation type="journal article" date="2006" name="Science">
        <title>Genome of rice cluster I archaea -- the key methane producers in the rice rhizosphere.</title>
        <authorList>
            <person name="Erkel C."/>
            <person name="Kube M."/>
            <person name="Reinhardt R."/>
            <person name="Liesack W."/>
        </authorList>
    </citation>
    <scope>NUCLEOTIDE SEQUENCE [LARGE SCALE GENOMIC DNA]</scope>
    <source>
        <strain>DSM 22066 / NBRC 105507 / MRE50</strain>
    </source>
</reference>
<organism>
    <name type="scientific">Methanocella arvoryzae (strain DSM 22066 / NBRC 105507 / MRE50)</name>
    <dbReference type="NCBI Taxonomy" id="351160"/>
    <lineage>
        <taxon>Archaea</taxon>
        <taxon>Methanobacteriati</taxon>
        <taxon>Methanobacteriota</taxon>
        <taxon>Stenosarchaea group</taxon>
        <taxon>Methanomicrobia</taxon>
        <taxon>Methanocellales</taxon>
        <taxon>Methanocellaceae</taxon>
        <taxon>Methanocella</taxon>
    </lineage>
</organism>
<protein>
    <recommendedName>
        <fullName evidence="1">Histidinol-phosphate aminotransferase</fullName>
        <ecNumber evidence="1">2.6.1.9</ecNumber>
    </recommendedName>
    <alternativeName>
        <fullName evidence="1">Imidazole acetol-phosphate transaminase</fullName>
    </alternativeName>
</protein>
<gene>
    <name evidence="1" type="primary">hisC</name>
    <name type="ordered locus">UNCMA_07130</name>
    <name type="ORF">RCIX2460</name>
</gene>
<name>HIS8_METAR</name>
<accession>Q0W253</accession>
<proteinExistence type="inferred from homology"/>
<evidence type="ECO:0000255" key="1">
    <source>
        <dbReference type="HAMAP-Rule" id="MF_01023"/>
    </source>
</evidence>
<comment type="catalytic activity">
    <reaction evidence="1">
        <text>L-histidinol phosphate + 2-oxoglutarate = 3-(imidazol-4-yl)-2-oxopropyl phosphate + L-glutamate</text>
        <dbReference type="Rhea" id="RHEA:23744"/>
        <dbReference type="ChEBI" id="CHEBI:16810"/>
        <dbReference type="ChEBI" id="CHEBI:29985"/>
        <dbReference type="ChEBI" id="CHEBI:57766"/>
        <dbReference type="ChEBI" id="CHEBI:57980"/>
        <dbReference type="EC" id="2.6.1.9"/>
    </reaction>
</comment>
<comment type="cofactor">
    <cofactor evidence="1">
        <name>pyridoxal 5'-phosphate</name>
        <dbReference type="ChEBI" id="CHEBI:597326"/>
    </cofactor>
</comment>
<comment type="pathway">
    <text evidence="1">Amino-acid biosynthesis; L-histidine biosynthesis; L-histidine from 5-phospho-alpha-D-ribose 1-diphosphate: step 7/9.</text>
</comment>
<comment type="similarity">
    <text evidence="1">Belongs to the class-II pyridoxal-phosphate-dependent aminotransferase family. Histidinol-phosphate aminotransferase subfamily.</text>
</comment>
<feature type="chain" id="PRO_0000319803" description="Histidinol-phosphate aminotransferase">
    <location>
        <begin position="1"/>
        <end position="361"/>
    </location>
</feature>
<feature type="modified residue" description="N6-(pyridoxal phosphate)lysine" evidence="1">
    <location>
        <position position="221"/>
    </location>
</feature>
<sequence>MIRARQSVQEIKEYVAGKNVEEVAASYGIDEKSIIKLASNESCLGASPLAIEAIRKAACDAHVYPSVDAIELREALAMRHGVPVRNIVCGNGMDAVIETLLRAFLETGDEVVIPLPAFSYYENVTRFCGATPKYCARRADFSLDVDAVLKQVTDRTKFIFITSPNNPTGNLTSLAEIRSVANAVDGIVFVDEAYIDFSGGKTALELMKECDNIVIGRTMSKAWGLAGMRIGYGFMPDWIFREYMKVATPFALSRIAIAAALAALKDEEHYNRTVETVKAERQFLMENVPFKVYPSEANFVLIDTAPLTSKHVVTEAMKRGVILRDCASFREMGDRYVRITVGTREQNVRLVEVLAEIKGSR</sequence>